<dbReference type="EMBL" id="Z46727">
    <property type="protein sequence ID" value="CAA86680.1"/>
    <property type="molecule type" value="Genomic_DNA"/>
</dbReference>
<dbReference type="EMBL" id="AY557689">
    <property type="protein sequence ID" value="AAS56015.1"/>
    <property type="molecule type" value="Genomic_DNA"/>
</dbReference>
<dbReference type="EMBL" id="BK006938">
    <property type="protein sequence ID" value="DAA12017.1"/>
    <property type="molecule type" value="Genomic_DNA"/>
</dbReference>
<dbReference type="PIR" id="S49771">
    <property type="entry name" value="S49771"/>
</dbReference>
<dbReference type="RefSeq" id="NP_010460.1">
    <property type="nucleotide sequence ID" value="NM_001180482.1"/>
</dbReference>
<dbReference type="PDB" id="5MRC">
    <property type="method" value="EM"/>
    <property type="resolution" value="3.25 A"/>
    <property type="chains" value="YY=47-319"/>
</dbReference>
<dbReference type="PDB" id="5MRE">
    <property type="method" value="EM"/>
    <property type="resolution" value="3.75 A"/>
    <property type="chains" value="YY=47-319"/>
</dbReference>
<dbReference type="PDB" id="5MRF">
    <property type="method" value="EM"/>
    <property type="resolution" value="4.97 A"/>
    <property type="chains" value="YY=47-319"/>
</dbReference>
<dbReference type="PDB" id="8D8K">
    <property type="method" value="EM"/>
    <property type="resolution" value="3.13 A"/>
    <property type="chains" value="Y=1-319"/>
</dbReference>
<dbReference type="PDB" id="8D8L">
    <property type="method" value="EM"/>
    <property type="resolution" value="2.60 A"/>
    <property type="chains" value="Y=1-319"/>
</dbReference>
<dbReference type="PDB" id="8OM2">
    <property type="method" value="EM"/>
    <property type="resolution" value="2.57 A"/>
    <property type="chains" value="Y=1-319"/>
</dbReference>
<dbReference type="PDB" id="8OM3">
    <property type="method" value="EM"/>
    <property type="resolution" value="2.87 A"/>
    <property type="chains" value="Y=1-319"/>
</dbReference>
<dbReference type="PDB" id="8OM4">
    <property type="method" value="EM"/>
    <property type="resolution" value="2.32 A"/>
    <property type="chains" value="Y=1-319"/>
</dbReference>
<dbReference type="PDBsum" id="5MRC"/>
<dbReference type="PDBsum" id="5MRE"/>
<dbReference type="PDBsum" id="5MRF"/>
<dbReference type="PDBsum" id="8D8K"/>
<dbReference type="PDBsum" id="8D8L"/>
<dbReference type="PDBsum" id="8OM2"/>
<dbReference type="PDBsum" id="8OM3"/>
<dbReference type="PDBsum" id="8OM4"/>
<dbReference type="EMDB" id="EMD-16966"/>
<dbReference type="EMDB" id="EMD-16967"/>
<dbReference type="EMDB" id="EMD-16968"/>
<dbReference type="EMDB" id="EMD-27250"/>
<dbReference type="EMDB" id="EMD-27251"/>
<dbReference type="EMDB" id="EMD-3551"/>
<dbReference type="EMDB" id="EMD-3552"/>
<dbReference type="EMDB" id="EMD-3553"/>
<dbReference type="SMR" id="Q03976"/>
<dbReference type="BioGRID" id="32228">
    <property type="interactions" value="220"/>
</dbReference>
<dbReference type="ComplexPortal" id="CPX-1603">
    <property type="entry name" value="37S mitochondrial small ribosomal subunit"/>
</dbReference>
<dbReference type="DIP" id="DIP-5130N"/>
<dbReference type="FunCoup" id="Q03976">
    <property type="interactions" value="180"/>
</dbReference>
<dbReference type="IntAct" id="Q03976">
    <property type="interactions" value="44"/>
</dbReference>
<dbReference type="MINT" id="Q03976"/>
<dbReference type="STRING" id="4932.YDR175C"/>
<dbReference type="iPTMnet" id="Q03976"/>
<dbReference type="PaxDb" id="4932-YDR175C"/>
<dbReference type="PeptideAtlas" id="Q03976"/>
<dbReference type="EnsemblFungi" id="YDR175C_mRNA">
    <property type="protein sequence ID" value="YDR175C"/>
    <property type="gene ID" value="YDR175C"/>
</dbReference>
<dbReference type="GeneID" id="851755"/>
<dbReference type="KEGG" id="sce:YDR175C"/>
<dbReference type="AGR" id="SGD:S000002582"/>
<dbReference type="SGD" id="S000002582">
    <property type="gene designation" value="RSM24"/>
</dbReference>
<dbReference type="VEuPathDB" id="FungiDB:YDR175C"/>
<dbReference type="eggNOG" id="KOG3933">
    <property type="taxonomic scope" value="Eukaryota"/>
</dbReference>
<dbReference type="GeneTree" id="ENSGT00390000003443"/>
<dbReference type="HOGENOM" id="CLU_943997_0_0_1"/>
<dbReference type="InParanoid" id="Q03976"/>
<dbReference type="OMA" id="YRQEYKP"/>
<dbReference type="OrthoDB" id="283424at2759"/>
<dbReference type="BioCyc" id="YEAST:G3O-29764-MONOMER"/>
<dbReference type="BioGRID-ORCS" id="851755">
    <property type="hits" value="4 hits in 10 CRISPR screens"/>
</dbReference>
<dbReference type="PRO" id="PR:Q03976"/>
<dbReference type="Proteomes" id="UP000002311">
    <property type="component" value="Chromosome IV"/>
</dbReference>
<dbReference type="RNAct" id="Q03976">
    <property type="molecule type" value="protein"/>
</dbReference>
<dbReference type="GO" id="GO:0005743">
    <property type="term" value="C:mitochondrial inner membrane"/>
    <property type="evidence" value="ECO:0000303"/>
    <property type="project" value="ComplexPortal"/>
</dbReference>
<dbReference type="GO" id="GO:0005763">
    <property type="term" value="C:mitochondrial small ribosomal subunit"/>
    <property type="evidence" value="ECO:0000314"/>
    <property type="project" value="SGD"/>
</dbReference>
<dbReference type="GO" id="GO:0005739">
    <property type="term" value="C:mitochondrion"/>
    <property type="evidence" value="ECO:0007005"/>
    <property type="project" value="SGD"/>
</dbReference>
<dbReference type="GO" id="GO:0003735">
    <property type="term" value="F:structural constituent of ribosome"/>
    <property type="evidence" value="ECO:0000314"/>
    <property type="project" value="SGD"/>
</dbReference>
<dbReference type="GO" id="GO:0032543">
    <property type="term" value="P:mitochondrial translation"/>
    <property type="evidence" value="ECO:0000303"/>
    <property type="project" value="ComplexPortal"/>
</dbReference>
<dbReference type="InterPro" id="IPR017081">
    <property type="entry name" value="Ribosomal_mS35"/>
</dbReference>
<dbReference type="InterPro" id="IPR019349">
    <property type="entry name" value="Ribosomal_mS35_mit"/>
</dbReference>
<dbReference type="InterPro" id="IPR039848">
    <property type="entry name" value="Ribosomal_mS35_mt"/>
</dbReference>
<dbReference type="PANTHER" id="PTHR13490">
    <property type="entry name" value="MITOCHONDRIAL 28S RIBOSOMAL PROTEIN S28"/>
    <property type="match status" value="1"/>
</dbReference>
<dbReference type="PANTHER" id="PTHR13490:SF0">
    <property type="entry name" value="SMALL RIBOSOMAL SUBUNIT PROTEIN MS35"/>
    <property type="match status" value="1"/>
</dbReference>
<dbReference type="Pfam" id="PF10213">
    <property type="entry name" value="MRP-S28"/>
    <property type="match status" value="1"/>
</dbReference>
<dbReference type="PIRSF" id="PIRSF036995">
    <property type="entry name" value="RSM24"/>
    <property type="match status" value="1"/>
</dbReference>
<keyword id="KW-0002">3D-structure</keyword>
<keyword id="KW-0496">Mitochondrion</keyword>
<keyword id="KW-1185">Reference proteome</keyword>
<keyword id="KW-0687">Ribonucleoprotein</keyword>
<keyword id="KW-0689">Ribosomal protein</keyword>
<keyword id="KW-0809">Transit peptide</keyword>
<gene>
    <name type="primary">RSM24</name>
    <name type="ordered locus">YDR175C</name>
</gene>
<accession>Q03976</accession>
<accession>D6VSF7</accession>
<name>RT24_YEAST</name>
<sequence>MKVPLGLWKVSRGNLWSTQKRVLTMSRCLNSDAGNEAKTVREGPAFSADLYMHPEKWKGLPPQRILELYWERMARLGSEYKPNKDELNALLTTSEYSNVPVNDIKKLYHRGEQGAIDIKGGNVNRDNSLRPFMFDELPSQAQELVAQHREQRFYNRLAAYELPLLAQYRQEYKRPSPESHPVTYRYTSYVGEEHPNSRKVVLSVKTKELGLEEKSLHKFRILARSRYDHTTDIFKMSSDKFEHASQNARYLHDILQRLLAESKDLTEDDFSDVPLDTRHTIAKSLRKKKRDYEFPEHWKRPEDAPKKKFDIVDQLLSTL</sequence>
<evidence type="ECO:0000255" key="1"/>
<evidence type="ECO:0000269" key="2">
    <source>
    </source>
</evidence>
<evidence type="ECO:0000269" key="3">
    <source>
    </source>
</evidence>
<evidence type="ECO:0000269" key="4">
    <source>
    </source>
</evidence>
<evidence type="ECO:0000269" key="5">
    <source>
    </source>
</evidence>
<evidence type="ECO:0000269" key="6">
    <source>
    </source>
</evidence>
<evidence type="ECO:0000269" key="7">
    <source>
    </source>
</evidence>
<evidence type="ECO:0000269" key="8">
    <source>
    </source>
</evidence>
<evidence type="ECO:0000303" key="9">
    <source>
    </source>
</evidence>
<evidence type="ECO:0000305" key="10"/>
<evidence type="ECO:0000305" key="11">
    <source>
    </source>
</evidence>
<evidence type="ECO:0000305" key="12">
    <source>
    </source>
</evidence>
<evidence type="ECO:0007829" key="13">
    <source>
        <dbReference type="PDB" id="8D8L"/>
    </source>
</evidence>
<reference key="1">
    <citation type="journal article" date="1997" name="Nature">
        <title>The nucleotide sequence of Saccharomyces cerevisiae chromosome IV.</title>
        <authorList>
            <person name="Jacq C."/>
            <person name="Alt-Moerbe J."/>
            <person name="Andre B."/>
            <person name="Arnold W."/>
            <person name="Bahr A."/>
            <person name="Ballesta J.P.G."/>
            <person name="Bargues M."/>
            <person name="Baron L."/>
            <person name="Becker A."/>
            <person name="Biteau N."/>
            <person name="Bloecker H."/>
            <person name="Blugeon C."/>
            <person name="Boskovic J."/>
            <person name="Brandt P."/>
            <person name="Brueckner M."/>
            <person name="Buitrago M.J."/>
            <person name="Coster F."/>
            <person name="Delaveau T."/>
            <person name="del Rey F."/>
            <person name="Dujon B."/>
            <person name="Eide L.G."/>
            <person name="Garcia-Cantalejo J.M."/>
            <person name="Goffeau A."/>
            <person name="Gomez-Peris A."/>
            <person name="Granotier C."/>
            <person name="Hanemann V."/>
            <person name="Hankeln T."/>
            <person name="Hoheisel J.D."/>
            <person name="Jaeger W."/>
            <person name="Jimenez A."/>
            <person name="Jonniaux J.-L."/>
            <person name="Kraemer C."/>
            <person name="Kuester H."/>
            <person name="Laamanen P."/>
            <person name="Legros Y."/>
            <person name="Louis E.J."/>
            <person name="Moeller-Rieker S."/>
            <person name="Monnet A."/>
            <person name="Moro M."/>
            <person name="Mueller-Auer S."/>
            <person name="Nussbaumer B."/>
            <person name="Paricio N."/>
            <person name="Paulin L."/>
            <person name="Perea J."/>
            <person name="Perez-Alonso M."/>
            <person name="Perez-Ortin J.E."/>
            <person name="Pohl T.M."/>
            <person name="Prydz H."/>
            <person name="Purnelle B."/>
            <person name="Rasmussen S.W."/>
            <person name="Remacha M.A."/>
            <person name="Revuelta J.L."/>
            <person name="Rieger M."/>
            <person name="Salom D."/>
            <person name="Saluz H.P."/>
            <person name="Saiz J.E."/>
            <person name="Saren A.-M."/>
            <person name="Schaefer M."/>
            <person name="Scharfe M."/>
            <person name="Schmidt E.R."/>
            <person name="Schneider C."/>
            <person name="Scholler P."/>
            <person name="Schwarz S."/>
            <person name="Soler-Mira A."/>
            <person name="Urrestarazu L.A."/>
            <person name="Verhasselt P."/>
            <person name="Vissers S."/>
            <person name="Voet M."/>
            <person name="Volckaert G."/>
            <person name="Wagner G."/>
            <person name="Wambutt R."/>
            <person name="Wedler E."/>
            <person name="Wedler H."/>
            <person name="Woelfl S."/>
            <person name="Harris D.E."/>
            <person name="Bowman S."/>
            <person name="Brown D."/>
            <person name="Churcher C.M."/>
            <person name="Connor R."/>
            <person name="Dedman K."/>
            <person name="Gentles S."/>
            <person name="Hamlin N."/>
            <person name="Hunt S."/>
            <person name="Jones L."/>
            <person name="McDonald S."/>
            <person name="Murphy L.D."/>
            <person name="Niblett D."/>
            <person name="Odell C."/>
            <person name="Oliver K."/>
            <person name="Rajandream M.A."/>
            <person name="Richards C."/>
            <person name="Shore L."/>
            <person name="Walsh S.V."/>
            <person name="Barrell B.G."/>
            <person name="Dietrich F.S."/>
            <person name="Mulligan J.T."/>
            <person name="Allen E."/>
            <person name="Araujo R."/>
            <person name="Aviles E."/>
            <person name="Berno A."/>
            <person name="Carpenter J."/>
            <person name="Chen E."/>
            <person name="Cherry J.M."/>
            <person name="Chung E."/>
            <person name="Duncan M."/>
            <person name="Hunicke-Smith S."/>
            <person name="Hyman R.W."/>
            <person name="Komp C."/>
            <person name="Lashkari D."/>
            <person name="Lew H."/>
            <person name="Lin D."/>
            <person name="Mosedale D."/>
            <person name="Nakahara K."/>
            <person name="Namath A."/>
            <person name="Oefner P."/>
            <person name="Oh C."/>
            <person name="Petel F.X."/>
            <person name="Roberts D."/>
            <person name="Schramm S."/>
            <person name="Schroeder M."/>
            <person name="Shogren T."/>
            <person name="Shroff N."/>
            <person name="Winant A."/>
            <person name="Yelton M.A."/>
            <person name="Botstein D."/>
            <person name="Davis R.W."/>
            <person name="Johnston M."/>
            <person name="Andrews S."/>
            <person name="Brinkman R."/>
            <person name="Cooper J."/>
            <person name="Ding H."/>
            <person name="Du Z."/>
            <person name="Favello A."/>
            <person name="Fulton L."/>
            <person name="Gattung S."/>
            <person name="Greco T."/>
            <person name="Hallsworth K."/>
            <person name="Hawkins J."/>
            <person name="Hillier L.W."/>
            <person name="Jier M."/>
            <person name="Johnson D."/>
            <person name="Johnston L."/>
            <person name="Kirsten J."/>
            <person name="Kucaba T."/>
            <person name="Langston Y."/>
            <person name="Latreille P."/>
            <person name="Le T."/>
            <person name="Mardis E."/>
            <person name="Menezes S."/>
            <person name="Miller N."/>
            <person name="Nhan M."/>
            <person name="Pauley A."/>
            <person name="Peluso D."/>
            <person name="Rifkin L."/>
            <person name="Riles L."/>
            <person name="Taich A."/>
            <person name="Trevaskis E."/>
            <person name="Vignati D."/>
            <person name="Wilcox L."/>
            <person name="Wohldman P."/>
            <person name="Vaudin M."/>
            <person name="Wilson R."/>
            <person name="Waterston R."/>
            <person name="Albermann K."/>
            <person name="Hani J."/>
            <person name="Heumann K."/>
            <person name="Kleine K."/>
            <person name="Mewes H.-W."/>
            <person name="Zollner A."/>
            <person name="Zaccaria P."/>
        </authorList>
    </citation>
    <scope>NUCLEOTIDE SEQUENCE [LARGE SCALE GENOMIC DNA]</scope>
    <source>
        <strain>ATCC 204508 / S288c</strain>
    </source>
</reference>
<reference key="2">
    <citation type="journal article" date="2014" name="G3 (Bethesda)">
        <title>The reference genome sequence of Saccharomyces cerevisiae: Then and now.</title>
        <authorList>
            <person name="Engel S.R."/>
            <person name="Dietrich F.S."/>
            <person name="Fisk D.G."/>
            <person name="Binkley G."/>
            <person name="Balakrishnan R."/>
            <person name="Costanzo M.C."/>
            <person name="Dwight S.S."/>
            <person name="Hitz B.C."/>
            <person name="Karra K."/>
            <person name="Nash R.S."/>
            <person name="Weng S."/>
            <person name="Wong E.D."/>
            <person name="Lloyd P."/>
            <person name="Skrzypek M.S."/>
            <person name="Miyasato S.R."/>
            <person name="Simison M."/>
            <person name="Cherry J.M."/>
        </authorList>
    </citation>
    <scope>GENOME REANNOTATION</scope>
    <source>
        <strain>ATCC 204508 / S288c</strain>
    </source>
</reference>
<reference key="3">
    <citation type="journal article" date="2007" name="Genome Res.">
        <title>Approaching a complete repository of sequence-verified protein-encoding clones for Saccharomyces cerevisiae.</title>
        <authorList>
            <person name="Hu Y."/>
            <person name="Rolfs A."/>
            <person name="Bhullar B."/>
            <person name="Murthy T.V.S."/>
            <person name="Zhu C."/>
            <person name="Berger M.F."/>
            <person name="Camargo A.A."/>
            <person name="Kelley F."/>
            <person name="McCarron S."/>
            <person name="Jepson D."/>
            <person name="Richardson A."/>
            <person name="Raphael J."/>
            <person name="Moreira D."/>
            <person name="Taycher E."/>
            <person name="Zuo D."/>
            <person name="Mohr S."/>
            <person name="Kane M.F."/>
            <person name="Williamson J."/>
            <person name="Simpson A.J.G."/>
            <person name="Bulyk M.L."/>
            <person name="Harlow E."/>
            <person name="Marsischky G."/>
            <person name="Kolodner R.D."/>
            <person name="LaBaer J."/>
        </authorList>
    </citation>
    <scope>NUCLEOTIDE SEQUENCE [GENOMIC DNA]</scope>
    <source>
        <strain>ATCC 204508 / S288c</strain>
    </source>
</reference>
<reference key="4">
    <citation type="journal article" date="2001" name="J. Biol. Chem.">
        <title>Identification of 12 new yeast mitochondrial ribosomal proteins including 6 that have no prokaryotic homologues.</title>
        <authorList>
            <person name="Saveanu C."/>
            <person name="Fromont-Racine M."/>
            <person name="Harington A."/>
            <person name="Ricard F."/>
            <person name="Namane A."/>
            <person name="Jacquier A."/>
        </authorList>
    </citation>
    <scope>SUBCELLULAR LOCATION</scope>
    <scope>IDENTIFICATION IN THE MITOCHONDRIAL RIBOSOMAL SMALL COMPLEX</scope>
    <scope>IDENTIFICATION BY MASS SPECTROMETRY</scope>
</reference>
<reference key="5">
    <citation type="journal article" date="2002" name="Eur. J. Biochem.">
        <title>Tag-mediated isolation of yeast mitochondrial ribosome and mass spectrometric identification of its new components.</title>
        <authorList>
            <person name="Gan X."/>
            <person name="Kitakawa M."/>
            <person name="Yoshino K."/>
            <person name="Oshiro N."/>
            <person name="Yonezawa K."/>
            <person name="Isono K."/>
        </authorList>
    </citation>
    <scope>IDENTIFICATION IN THE MITOCHONDRIAL RIBOSOMAL SMALL COMPLEX</scope>
    <scope>IDENTIFICATION BY MASS SPECTROMETRY</scope>
</reference>
<reference key="6">
    <citation type="journal article" date="2003" name="Nature">
        <title>Global analysis of protein localization in budding yeast.</title>
        <authorList>
            <person name="Huh W.-K."/>
            <person name="Falvo J.V."/>
            <person name="Gerke L.C."/>
            <person name="Carroll A.S."/>
            <person name="Howson R.W."/>
            <person name="Weissman J.S."/>
            <person name="O'Shea E.K."/>
        </authorList>
    </citation>
    <scope>SUBCELLULAR LOCATION [LARGE SCALE ANALYSIS]</scope>
</reference>
<reference key="7">
    <citation type="journal article" date="2003" name="Nature">
        <title>Global analysis of protein expression in yeast.</title>
        <authorList>
            <person name="Ghaemmaghami S."/>
            <person name="Huh W.-K."/>
            <person name="Bower K."/>
            <person name="Howson R.W."/>
            <person name="Belle A."/>
            <person name="Dephoure N."/>
            <person name="O'Shea E.K."/>
            <person name="Weissman J.S."/>
        </authorList>
    </citation>
    <scope>LEVEL OF PROTEIN EXPRESSION [LARGE SCALE ANALYSIS]</scope>
</reference>
<reference key="8">
    <citation type="journal article" date="2003" name="Proc. Natl. Acad. Sci. U.S.A.">
        <title>The proteome of Saccharomyces cerevisiae mitochondria.</title>
        <authorList>
            <person name="Sickmann A."/>
            <person name="Reinders J."/>
            <person name="Wagner Y."/>
            <person name="Joppich C."/>
            <person name="Zahedi R.P."/>
            <person name="Meyer H.E."/>
            <person name="Schoenfisch B."/>
            <person name="Perschil I."/>
            <person name="Chacinska A."/>
            <person name="Guiard B."/>
            <person name="Rehling P."/>
            <person name="Pfanner N."/>
            <person name="Meisinger C."/>
        </authorList>
    </citation>
    <scope>SUBCELLULAR LOCATION [LARGE SCALE ANALYSIS]</scope>
    <source>
        <strain>ATCC 76625 / YPH499</strain>
    </source>
</reference>
<reference key="9">
    <citation type="journal article" date="2015" name="Nat. Commun.">
        <title>Organization of the mitochondrial translation machinery studied in situ by cryoelectron tomography.</title>
        <authorList>
            <person name="Pfeffer S."/>
            <person name="Woellhaf M.W."/>
            <person name="Herrmann J.M."/>
            <person name="Forster F."/>
        </authorList>
    </citation>
    <scope>SUBCELLULAR LOCATION</scope>
</reference>
<reference key="10">
    <citation type="journal article" date="2017" name="Science">
        <title>The structure of the yeast mitochondrial ribosome.</title>
        <authorList>
            <person name="Desai N."/>
            <person name="Brown A."/>
            <person name="Amunts A."/>
            <person name="Ramakrishnan V."/>
        </authorList>
    </citation>
    <scope>STRUCTURE BY ELECTRON MICROSCOPY (3.25 ANGSTROMS)</scope>
    <scope>SUBUNIT</scope>
</reference>
<protein>
    <recommendedName>
        <fullName evidence="9">Small ribosomal subunit protein mS35</fullName>
    </recommendedName>
    <alternativeName>
        <fullName>37S ribosomal protein S24, mitochondrial</fullName>
    </alternativeName>
    <alternativeName>
        <fullName>Mitochondrial ribosomal small subunit protein 24</fullName>
    </alternativeName>
</protein>
<proteinExistence type="evidence at protein level"/>
<feature type="transit peptide" description="Mitochondrion" evidence="1">
    <location>
        <begin position="1"/>
        <end position="30"/>
    </location>
</feature>
<feature type="chain" id="PRO_0000268705" description="Small ribosomal subunit protein mS35">
    <location>
        <begin position="31"/>
        <end position="319"/>
    </location>
</feature>
<feature type="helix" evidence="13">
    <location>
        <begin position="50"/>
        <end position="52"/>
    </location>
</feature>
<feature type="helix" evidence="13">
    <location>
        <begin position="54"/>
        <end position="57"/>
    </location>
</feature>
<feature type="strand" evidence="13">
    <location>
        <begin position="58"/>
        <end position="60"/>
    </location>
</feature>
<feature type="helix" evidence="13">
    <location>
        <begin position="62"/>
        <end position="76"/>
    </location>
</feature>
<feature type="helix" evidence="13">
    <location>
        <begin position="77"/>
        <end position="79"/>
    </location>
</feature>
<feature type="helix" evidence="13">
    <location>
        <begin position="84"/>
        <end position="93"/>
    </location>
</feature>
<feature type="turn" evidence="13">
    <location>
        <begin position="94"/>
        <end position="98"/>
    </location>
</feature>
<feature type="helix" evidence="13">
    <location>
        <begin position="101"/>
        <end position="117"/>
    </location>
</feature>
<feature type="helix" evidence="13">
    <location>
        <begin position="139"/>
        <end position="160"/>
    </location>
</feature>
<feature type="helix" evidence="13">
    <location>
        <begin position="163"/>
        <end position="168"/>
    </location>
</feature>
<feature type="turn" evidence="13">
    <location>
        <begin position="177"/>
        <end position="179"/>
    </location>
</feature>
<feature type="strand" evidence="13">
    <location>
        <begin position="182"/>
        <end position="189"/>
    </location>
</feature>
<feature type="helix" evidence="13">
    <location>
        <begin position="195"/>
        <end position="198"/>
    </location>
</feature>
<feature type="strand" evidence="13">
    <location>
        <begin position="200"/>
        <end position="205"/>
    </location>
</feature>
<feature type="helix" evidence="13">
    <location>
        <begin position="206"/>
        <end position="208"/>
    </location>
</feature>
<feature type="helix" evidence="13">
    <location>
        <begin position="213"/>
        <end position="223"/>
    </location>
</feature>
<feature type="helix" evidence="13">
    <location>
        <begin position="224"/>
        <end position="226"/>
    </location>
</feature>
<feature type="turn" evidence="13">
    <location>
        <begin position="229"/>
        <end position="232"/>
    </location>
</feature>
<feature type="strand" evidence="13">
    <location>
        <begin position="233"/>
        <end position="238"/>
    </location>
</feature>
<feature type="strand" evidence="13">
    <location>
        <begin position="241"/>
        <end position="243"/>
    </location>
</feature>
<feature type="helix" evidence="13">
    <location>
        <begin position="244"/>
        <end position="263"/>
    </location>
</feature>
<feature type="helix" evidence="13">
    <location>
        <begin position="278"/>
        <end position="285"/>
    </location>
</feature>
<feature type="helix" evidence="13">
    <location>
        <begin position="296"/>
        <end position="298"/>
    </location>
</feature>
<feature type="helix" evidence="13">
    <location>
        <begin position="301"/>
        <end position="303"/>
    </location>
</feature>
<feature type="helix" evidence="13">
    <location>
        <begin position="311"/>
        <end position="316"/>
    </location>
</feature>
<organism>
    <name type="scientific">Saccharomyces cerevisiae (strain ATCC 204508 / S288c)</name>
    <name type="common">Baker's yeast</name>
    <dbReference type="NCBI Taxonomy" id="559292"/>
    <lineage>
        <taxon>Eukaryota</taxon>
        <taxon>Fungi</taxon>
        <taxon>Dikarya</taxon>
        <taxon>Ascomycota</taxon>
        <taxon>Saccharomycotina</taxon>
        <taxon>Saccharomycetes</taxon>
        <taxon>Saccharomycetales</taxon>
        <taxon>Saccharomycetaceae</taxon>
        <taxon>Saccharomyces</taxon>
    </lineage>
</organism>
<comment type="function">
    <text evidence="11 12">Component of the mitochondrial ribosome (mitoribosome), a dedicated translation machinery responsible for the synthesis of mitochondrial genome-encoded proteins, including at least some of the essential transmembrane subunits of the mitochondrial respiratory chain. The mitoribosomes are attached to the mitochondrial inner membrane and translation products are cotranslationally integrated into the membrane.</text>
</comment>
<comment type="subunit">
    <text evidence="2 3 8">Component of the mitochondrial small ribosomal subunit (mt-SSU). Mature yeast 74S mitochondrial ribosomes consist of a small (37S) and a large (54S) subunit. The 37S small subunit contains a 15S ribosomal RNA (15S mt-rRNA) and 34 different proteins. The 54S large subunit contains a 21S rRNA (21S mt-rRNA) and 46 different proteins.</text>
</comment>
<comment type="subcellular location">
    <subcellularLocation>
        <location evidence="2 4 6">Mitochondrion</location>
    </subcellularLocation>
    <text evidence="7">Mitoribosomes are tethered to the mitochondrial inner membrane and spatially aligned with the membrane insertion machinery through two distinct membrane contact sites, formed by the 21S rRNA expansion segment 96-ES1 and the inner membrane protein MBA1.</text>
</comment>
<comment type="miscellaneous">
    <text evidence="5">Present with 3150 molecules/cell in log phase SD medium.</text>
</comment>
<comment type="similarity">
    <text evidence="10">Belongs to the mitochondrion-specific ribosomal protein mS35 family.</text>
</comment>